<feature type="chain" id="PRO_0000049764" description="Uncharacterized protein YqbM">
    <location>
        <begin position="1"/>
        <end position="147"/>
    </location>
</feature>
<feature type="sequence conflict" description="In Ref. 1; BAA06945 and 2; BAA12408." evidence="1" ref="1 2">
    <original>A</original>
    <variation>P</variation>
    <location>
        <position position="114"/>
    </location>
</feature>
<dbReference type="EMBL" id="D32216">
    <property type="protein sequence ID" value="BAA06945.1"/>
    <property type="molecule type" value="Genomic_DNA"/>
</dbReference>
<dbReference type="EMBL" id="D84432">
    <property type="protein sequence ID" value="BAA12408.1"/>
    <property type="molecule type" value="Genomic_DNA"/>
</dbReference>
<dbReference type="EMBL" id="AL009126">
    <property type="protein sequence ID" value="CAB14547.2"/>
    <property type="molecule type" value="Genomic_DNA"/>
</dbReference>
<dbReference type="PIR" id="H69947">
    <property type="entry name" value="H69947"/>
</dbReference>
<dbReference type="RefSeq" id="NP_390483.2">
    <property type="nucleotide sequence ID" value="NC_000964.3"/>
</dbReference>
<dbReference type="RefSeq" id="WP_003229930.1">
    <property type="nucleotide sequence ID" value="NZ_OZ025638.1"/>
</dbReference>
<dbReference type="SMR" id="P45929"/>
<dbReference type="FunCoup" id="P45929">
    <property type="interactions" value="40"/>
</dbReference>
<dbReference type="STRING" id="224308.BSU26060"/>
<dbReference type="PaxDb" id="224308-BSU26060"/>
<dbReference type="EnsemblBacteria" id="CAB14547">
    <property type="protein sequence ID" value="CAB14547"/>
    <property type="gene ID" value="BSU_26060"/>
</dbReference>
<dbReference type="GeneID" id="937740"/>
<dbReference type="KEGG" id="bsu:BSU26060"/>
<dbReference type="PATRIC" id="fig|224308.179.peg.2832"/>
<dbReference type="eggNOG" id="ENOG5032S1D">
    <property type="taxonomic scope" value="Bacteria"/>
</dbReference>
<dbReference type="InParanoid" id="P45929"/>
<dbReference type="OrthoDB" id="1697482at2"/>
<dbReference type="PhylomeDB" id="P45929"/>
<dbReference type="BioCyc" id="BSUB:BSU26060-MONOMER"/>
<dbReference type="Proteomes" id="UP000001570">
    <property type="component" value="Chromosome"/>
</dbReference>
<dbReference type="Gene3D" id="2.30.110.40">
    <property type="entry name" value="Phage tail tube protein"/>
    <property type="match status" value="1"/>
</dbReference>
<dbReference type="InterPro" id="IPR018989">
    <property type="entry name" value="DUF2001"/>
</dbReference>
<dbReference type="InterPro" id="IPR038628">
    <property type="entry name" value="XkdM-like_sf"/>
</dbReference>
<dbReference type="Pfam" id="PF09393">
    <property type="entry name" value="DUF2001"/>
    <property type="match status" value="1"/>
</dbReference>
<dbReference type="SUPFAM" id="SSF69279">
    <property type="entry name" value="Phage tail proteins"/>
    <property type="match status" value="1"/>
</dbReference>
<protein>
    <recommendedName>
        <fullName>Uncharacterized protein YqbM</fullName>
    </recommendedName>
</protein>
<gene>
    <name type="primary">yqbM</name>
    <name type="ordered locus">BSU26060</name>
</gene>
<reference key="1">
    <citation type="journal article" date="1995" name="Microbiology">
        <title>Complete nucleotide sequence of a skin element excised by DNA rearrangement during sporulation in Bacillus subtilis.</title>
        <authorList>
            <person name="Takemaru K."/>
            <person name="Mizuno M."/>
            <person name="Sato T."/>
            <person name="Takeuchi M."/>
            <person name="Kobayashi Y."/>
        </authorList>
    </citation>
    <scope>NUCLEOTIDE SEQUENCE [GENOMIC DNA]</scope>
    <source>
        <strain>168 / JH642</strain>
    </source>
</reference>
<reference key="2">
    <citation type="journal article" date="1996" name="Microbiology">
        <title>Systematic sequencing of the 283 kb 210 degrees-232 degrees region of the Bacillus subtilis genome containing the skin element and many sporulation genes.</title>
        <authorList>
            <person name="Mizuno M."/>
            <person name="Masuda S."/>
            <person name="Takemaru K."/>
            <person name="Hosono S."/>
            <person name="Sato T."/>
            <person name="Takeuchi M."/>
            <person name="Kobayashi Y."/>
        </authorList>
    </citation>
    <scope>NUCLEOTIDE SEQUENCE [GENOMIC DNA]</scope>
    <source>
        <strain>168 / JH642</strain>
    </source>
</reference>
<reference key="3">
    <citation type="journal article" date="1997" name="Nature">
        <title>The complete genome sequence of the Gram-positive bacterium Bacillus subtilis.</title>
        <authorList>
            <person name="Kunst F."/>
            <person name="Ogasawara N."/>
            <person name="Moszer I."/>
            <person name="Albertini A.M."/>
            <person name="Alloni G."/>
            <person name="Azevedo V."/>
            <person name="Bertero M.G."/>
            <person name="Bessieres P."/>
            <person name="Bolotin A."/>
            <person name="Borchert S."/>
            <person name="Borriss R."/>
            <person name="Boursier L."/>
            <person name="Brans A."/>
            <person name="Braun M."/>
            <person name="Brignell S.C."/>
            <person name="Bron S."/>
            <person name="Brouillet S."/>
            <person name="Bruschi C.V."/>
            <person name="Caldwell B."/>
            <person name="Capuano V."/>
            <person name="Carter N.M."/>
            <person name="Choi S.-K."/>
            <person name="Codani J.-J."/>
            <person name="Connerton I.F."/>
            <person name="Cummings N.J."/>
            <person name="Daniel R.A."/>
            <person name="Denizot F."/>
            <person name="Devine K.M."/>
            <person name="Duesterhoeft A."/>
            <person name="Ehrlich S.D."/>
            <person name="Emmerson P.T."/>
            <person name="Entian K.-D."/>
            <person name="Errington J."/>
            <person name="Fabret C."/>
            <person name="Ferrari E."/>
            <person name="Foulger D."/>
            <person name="Fritz C."/>
            <person name="Fujita M."/>
            <person name="Fujita Y."/>
            <person name="Fuma S."/>
            <person name="Galizzi A."/>
            <person name="Galleron N."/>
            <person name="Ghim S.-Y."/>
            <person name="Glaser P."/>
            <person name="Goffeau A."/>
            <person name="Golightly E.J."/>
            <person name="Grandi G."/>
            <person name="Guiseppi G."/>
            <person name="Guy B.J."/>
            <person name="Haga K."/>
            <person name="Haiech J."/>
            <person name="Harwood C.R."/>
            <person name="Henaut A."/>
            <person name="Hilbert H."/>
            <person name="Holsappel S."/>
            <person name="Hosono S."/>
            <person name="Hullo M.-F."/>
            <person name="Itaya M."/>
            <person name="Jones L.-M."/>
            <person name="Joris B."/>
            <person name="Karamata D."/>
            <person name="Kasahara Y."/>
            <person name="Klaerr-Blanchard M."/>
            <person name="Klein C."/>
            <person name="Kobayashi Y."/>
            <person name="Koetter P."/>
            <person name="Koningstein G."/>
            <person name="Krogh S."/>
            <person name="Kumano M."/>
            <person name="Kurita K."/>
            <person name="Lapidus A."/>
            <person name="Lardinois S."/>
            <person name="Lauber J."/>
            <person name="Lazarevic V."/>
            <person name="Lee S.-M."/>
            <person name="Levine A."/>
            <person name="Liu H."/>
            <person name="Masuda S."/>
            <person name="Mauel C."/>
            <person name="Medigue C."/>
            <person name="Medina N."/>
            <person name="Mellado R.P."/>
            <person name="Mizuno M."/>
            <person name="Moestl D."/>
            <person name="Nakai S."/>
            <person name="Noback M."/>
            <person name="Noone D."/>
            <person name="O'Reilly M."/>
            <person name="Ogawa K."/>
            <person name="Ogiwara A."/>
            <person name="Oudega B."/>
            <person name="Park S.-H."/>
            <person name="Parro V."/>
            <person name="Pohl T.M."/>
            <person name="Portetelle D."/>
            <person name="Porwollik S."/>
            <person name="Prescott A.M."/>
            <person name="Presecan E."/>
            <person name="Pujic P."/>
            <person name="Purnelle B."/>
            <person name="Rapoport G."/>
            <person name="Rey M."/>
            <person name="Reynolds S."/>
            <person name="Rieger M."/>
            <person name="Rivolta C."/>
            <person name="Rocha E."/>
            <person name="Roche B."/>
            <person name="Rose M."/>
            <person name="Sadaie Y."/>
            <person name="Sato T."/>
            <person name="Scanlan E."/>
            <person name="Schleich S."/>
            <person name="Schroeter R."/>
            <person name="Scoffone F."/>
            <person name="Sekiguchi J."/>
            <person name="Sekowska A."/>
            <person name="Seror S.J."/>
            <person name="Serror P."/>
            <person name="Shin B.-S."/>
            <person name="Soldo B."/>
            <person name="Sorokin A."/>
            <person name="Tacconi E."/>
            <person name="Takagi T."/>
            <person name="Takahashi H."/>
            <person name="Takemaru K."/>
            <person name="Takeuchi M."/>
            <person name="Tamakoshi A."/>
            <person name="Tanaka T."/>
            <person name="Terpstra P."/>
            <person name="Tognoni A."/>
            <person name="Tosato V."/>
            <person name="Uchiyama S."/>
            <person name="Vandenbol M."/>
            <person name="Vannier F."/>
            <person name="Vassarotti A."/>
            <person name="Viari A."/>
            <person name="Wambutt R."/>
            <person name="Wedler E."/>
            <person name="Wedler H."/>
            <person name="Weitzenegger T."/>
            <person name="Winters P."/>
            <person name="Wipat A."/>
            <person name="Yamamoto H."/>
            <person name="Yamane K."/>
            <person name="Yasumoto K."/>
            <person name="Yata K."/>
            <person name="Yoshida K."/>
            <person name="Yoshikawa H.-F."/>
            <person name="Zumstein E."/>
            <person name="Yoshikawa H."/>
            <person name="Danchin A."/>
        </authorList>
    </citation>
    <scope>NUCLEOTIDE SEQUENCE [LARGE SCALE GENOMIC DNA]</scope>
    <source>
        <strain>168</strain>
    </source>
</reference>
<reference key="4">
    <citation type="journal article" date="2009" name="Microbiology">
        <title>From a consortium sequence to a unified sequence: the Bacillus subtilis 168 reference genome a decade later.</title>
        <authorList>
            <person name="Barbe V."/>
            <person name="Cruveiller S."/>
            <person name="Kunst F."/>
            <person name="Lenoble P."/>
            <person name="Meurice G."/>
            <person name="Sekowska A."/>
            <person name="Vallenet D."/>
            <person name="Wang T."/>
            <person name="Moszer I."/>
            <person name="Medigue C."/>
            <person name="Danchin A."/>
        </authorList>
    </citation>
    <scope>SEQUENCE REVISION TO 114</scope>
</reference>
<reference key="5">
    <citation type="journal article" date="1995" name="Gene">
        <title>Analysis of a Bacillus subtilis genome fragment using a co-operative computer system prototype.</title>
        <authorList>
            <person name="Medigue C."/>
            <person name="Moszer I."/>
            <person name="Viari A."/>
            <person name="Danchin A."/>
        </authorList>
    </citation>
    <scope>IDENTIFICATION</scope>
</reference>
<sequence>MALKAQNTISGKEGRLFLDGEEMAHIKTFEANVEKNKSEVNIMGRRMTGHKTTGANGTGTATFYKVTSQFVLIMMDYVKKGSDPYFTLQAVLDDASSGRGTERVTLYDVNFDSAKIAGLDVDSEALEEEVPFTFEDFDVPEQLKSTF</sequence>
<keyword id="KW-1185">Reference proteome</keyword>
<evidence type="ECO:0000305" key="1"/>
<accession>P45929</accession>
<name>YQBM_BACSU</name>
<proteinExistence type="predicted"/>
<organism>
    <name type="scientific">Bacillus subtilis (strain 168)</name>
    <dbReference type="NCBI Taxonomy" id="224308"/>
    <lineage>
        <taxon>Bacteria</taxon>
        <taxon>Bacillati</taxon>
        <taxon>Bacillota</taxon>
        <taxon>Bacilli</taxon>
        <taxon>Bacillales</taxon>
        <taxon>Bacillaceae</taxon>
        <taxon>Bacillus</taxon>
    </lineage>
</organism>
<comment type="similarity">
    <text evidence="1">To B.subtilis XkdM.</text>
</comment>